<organism>
    <name type="scientific">Staphylococcus aureus (strain USA300)</name>
    <dbReference type="NCBI Taxonomy" id="367830"/>
    <lineage>
        <taxon>Bacteria</taxon>
        <taxon>Bacillati</taxon>
        <taxon>Bacillota</taxon>
        <taxon>Bacilli</taxon>
        <taxon>Bacillales</taxon>
        <taxon>Staphylococcaceae</taxon>
        <taxon>Staphylococcus</taxon>
    </lineage>
</organism>
<sequence>MEHTIAVIPGSFDPITYGHLDIIERSTDRFDEIHVCVLKNSKKEGTFSLEERMDLIEQSVKHLPNVKVHQFSGLLVDYCEQVGAKTIIRGLRAVSDFEYELRLTSMNKKLNNEIETLYMMSSTNYSFISSSIVKEVAAYRADISEFVPPYVEKALKKKFK</sequence>
<feature type="chain" id="PRO_1000011244" description="Phosphopantetheine adenylyltransferase">
    <location>
        <begin position="1"/>
        <end position="160"/>
    </location>
</feature>
<feature type="binding site" evidence="1">
    <location>
        <begin position="11"/>
        <end position="12"/>
    </location>
    <ligand>
        <name>ATP</name>
        <dbReference type="ChEBI" id="CHEBI:30616"/>
    </ligand>
</feature>
<feature type="binding site" evidence="1">
    <location>
        <position position="11"/>
    </location>
    <ligand>
        <name>substrate</name>
    </ligand>
</feature>
<feature type="binding site" evidence="1">
    <location>
        <position position="19"/>
    </location>
    <ligand>
        <name>ATP</name>
        <dbReference type="ChEBI" id="CHEBI:30616"/>
    </ligand>
</feature>
<feature type="binding site" evidence="1">
    <location>
        <position position="43"/>
    </location>
    <ligand>
        <name>substrate</name>
    </ligand>
</feature>
<feature type="binding site" evidence="1">
    <location>
        <position position="75"/>
    </location>
    <ligand>
        <name>substrate</name>
    </ligand>
</feature>
<feature type="binding site" evidence="1">
    <location>
        <position position="89"/>
    </location>
    <ligand>
        <name>substrate</name>
    </ligand>
</feature>
<feature type="binding site" evidence="1">
    <location>
        <begin position="90"/>
        <end position="92"/>
    </location>
    <ligand>
        <name>ATP</name>
        <dbReference type="ChEBI" id="CHEBI:30616"/>
    </ligand>
</feature>
<feature type="binding site" evidence="1">
    <location>
        <position position="100"/>
    </location>
    <ligand>
        <name>ATP</name>
        <dbReference type="ChEBI" id="CHEBI:30616"/>
    </ligand>
</feature>
<feature type="binding site" evidence="1">
    <location>
        <begin position="125"/>
        <end position="131"/>
    </location>
    <ligand>
        <name>ATP</name>
        <dbReference type="ChEBI" id="CHEBI:30616"/>
    </ligand>
</feature>
<feature type="site" description="Transition state stabilizer" evidence="1">
    <location>
        <position position="19"/>
    </location>
</feature>
<keyword id="KW-0067">ATP-binding</keyword>
<keyword id="KW-0173">Coenzyme A biosynthesis</keyword>
<keyword id="KW-0963">Cytoplasm</keyword>
<keyword id="KW-0460">Magnesium</keyword>
<keyword id="KW-0547">Nucleotide-binding</keyword>
<keyword id="KW-0548">Nucleotidyltransferase</keyword>
<keyword id="KW-0808">Transferase</keyword>
<proteinExistence type="inferred from homology"/>
<comment type="function">
    <text evidence="1">Reversibly transfers an adenylyl group from ATP to 4'-phosphopantetheine, yielding dephospho-CoA (dPCoA) and pyrophosphate.</text>
</comment>
<comment type="catalytic activity">
    <reaction evidence="1">
        <text>(R)-4'-phosphopantetheine + ATP + H(+) = 3'-dephospho-CoA + diphosphate</text>
        <dbReference type="Rhea" id="RHEA:19801"/>
        <dbReference type="ChEBI" id="CHEBI:15378"/>
        <dbReference type="ChEBI" id="CHEBI:30616"/>
        <dbReference type="ChEBI" id="CHEBI:33019"/>
        <dbReference type="ChEBI" id="CHEBI:57328"/>
        <dbReference type="ChEBI" id="CHEBI:61723"/>
        <dbReference type="EC" id="2.7.7.3"/>
    </reaction>
</comment>
<comment type="cofactor">
    <cofactor evidence="1">
        <name>Mg(2+)</name>
        <dbReference type="ChEBI" id="CHEBI:18420"/>
    </cofactor>
</comment>
<comment type="pathway">
    <text evidence="1">Cofactor biosynthesis; coenzyme A biosynthesis; CoA from (R)-pantothenate: step 4/5.</text>
</comment>
<comment type="subunit">
    <text evidence="1">Homohexamer.</text>
</comment>
<comment type="subcellular location">
    <subcellularLocation>
        <location evidence="1">Cytoplasm</location>
    </subcellularLocation>
</comment>
<comment type="similarity">
    <text evidence="1">Belongs to the bacterial CoaD family.</text>
</comment>
<name>COAD_STAA3</name>
<accession>Q2FHV6</accession>
<evidence type="ECO:0000255" key="1">
    <source>
        <dbReference type="HAMAP-Rule" id="MF_00151"/>
    </source>
</evidence>
<protein>
    <recommendedName>
        <fullName evidence="1">Phosphopantetheine adenylyltransferase</fullName>
        <ecNumber evidence="1">2.7.7.3</ecNumber>
    </recommendedName>
    <alternativeName>
        <fullName evidence="1">Dephospho-CoA pyrophosphorylase</fullName>
    </alternativeName>
    <alternativeName>
        <fullName evidence="1">Pantetheine-phosphate adenylyltransferase</fullName>
        <shortName evidence="1">PPAT</shortName>
    </alternativeName>
</protein>
<reference key="1">
    <citation type="journal article" date="2006" name="Lancet">
        <title>Complete genome sequence of USA300, an epidemic clone of community-acquired meticillin-resistant Staphylococcus aureus.</title>
        <authorList>
            <person name="Diep B.A."/>
            <person name="Gill S.R."/>
            <person name="Chang R.F."/>
            <person name="Phan T.H."/>
            <person name="Chen J.H."/>
            <person name="Davidson M.G."/>
            <person name="Lin F."/>
            <person name="Lin J."/>
            <person name="Carleton H.A."/>
            <person name="Mongodin E.F."/>
            <person name="Sensabaugh G.F."/>
            <person name="Perdreau-Remington F."/>
        </authorList>
    </citation>
    <scope>NUCLEOTIDE SEQUENCE [LARGE SCALE GENOMIC DNA]</scope>
    <source>
        <strain>USA300</strain>
    </source>
</reference>
<gene>
    <name evidence="1" type="primary">coaD</name>
    <name type="ordered locus">SAUSA300_1024</name>
</gene>
<dbReference type="EC" id="2.7.7.3" evidence="1"/>
<dbReference type="EMBL" id="CP000255">
    <property type="protein sequence ID" value="ABD22879.1"/>
    <property type="molecule type" value="Genomic_DNA"/>
</dbReference>
<dbReference type="RefSeq" id="WP_000401377.1">
    <property type="nucleotide sequence ID" value="NZ_CP027476.1"/>
</dbReference>
<dbReference type="SMR" id="Q2FHV6"/>
<dbReference type="GeneID" id="98345441"/>
<dbReference type="KEGG" id="saa:SAUSA300_1024"/>
<dbReference type="HOGENOM" id="CLU_100149_0_1_9"/>
<dbReference type="OMA" id="MALMNRK"/>
<dbReference type="UniPathway" id="UPA00241">
    <property type="reaction ID" value="UER00355"/>
</dbReference>
<dbReference type="Proteomes" id="UP000001939">
    <property type="component" value="Chromosome"/>
</dbReference>
<dbReference type="GO" id="GO:0005737">
    <property type="term" value="C:cytoplasm"/>
    <property type="evidence" value="ECO:0007669"/>
    <property type="project" value="UniProtKB-SubCell"/>
</dbReference>
<dbReference type="GO" id="GO:0005524">
    <property type="term" value="F:ATP binding"/>
    <property type="evidence" value="ECO:0007669"/>
    <property type="project" value="UniProtKB-KW"/>
</dbReference>
<dbReference type="GO" id="GO:0004595">
    <property type="term" value="F:pantetheine-phosphate adenylyltransferase activity"/>
    <property type="evidence" value="ECO:0007669"/>
    <property type="project" value="UniProtKB-UniRule"/>
</dbReference>
<dbReference type="GO" id="GO:0015937">
    <property type="term" value="P:coenzyme A biosynthetic process"/>
    <property type="evidence" value="ECO:0007669"/>
    <property type="project" value="UniProtKB-UniRule"/>
</dbReference>
<dbReference type="CDD" id="cd02163">
    <property type="entry name" value="PPAT"/>
    <property type="match status" value="1"/>
</dbReference>
<dbReference type="Gene3D" id="3.40.50.620">
    <property type="entry name" value="HUPs"/>
    <property type="match status" value="1"/>
</dbReference>
<dbReference type="HAMAP" id="MF_00151">
    <property type="entry name" value="PPAT_bact"/>
    <property type="match status" value="1"/>
</dbReference>
<dbReference type="InterPro" id="IPR004821">
    <property type="entry name" value="Cyt_trans-like"/>
</dbReference>
<dbReference type="InterPro" id="IPR001980">
    <property type="entry name" value="PPAT"/>
</dbReference>
<dbReference type="InterPro" id="IPR014729">
    <property type="entry name" value="Rossmann-like_a/b/a_fold"/>
</dbReference>
<dbReference type="NCBIfam" id="TIGR01510">
    <property type="entry name" value="coaD_prev_kdtB"/>
    <property type="match status" value="1"/>
</dbReference>
<dbReference type="NCBIfam" id="TIGR00125">
    <property type="entry name" value="cyt_tran_rel"/>
    <property type="match status" value="1"/>
</dbReference>
<dbReference type="PANTHER" id="PTHR21342">
    <property type="entry name" value="PHOSPHOPANTETHEINE ADENYLYLTRANSFERASE"/>
    <property type="match status" value="1"/>
</dbReference>
<dbReference type="PANTHER" id="PTHR21342:SF1">
    <property type="entry name" value="PHOSPHOPANTETHEINE ADENYLYLTRANSFERASE"/>
    <property type="match status" value="1"/>
</dbReference>
<dbReference type="Pfam" id="PF01467">
    <property type="entry name" value="CTP_transf_like"/>
    <property type="match status" value="1"/>
</dbReference>
<dbReference type="PRINTS" id="PR01020">
    <property type="entry name" value="LPSBIOSNTHSS"/>
</dbReference>
<dbReference type="SUPFAM" id="SSF52374">
    <property type="entry name" value="Nucleotidylyl transferase"/>
    <property type="match status" value="1"/>
</dbReference>